<comment type="function">
    <text evidence="1">May play a role in DNA repair. It seems to be involved in an RecBC-independent recombinational process of DNA repair. It may act with RecF and RecO.</text>
</comment>
<comment type="similarity">
    <text evidence="1">Belongs to the RecR family.</text>
</comment>
<organism>
    <name type="scientific">Natranaerobius thermophilus (strain ATCC BAA-1301 / DSM 18059 / JW/NM-WN-LF)</name>
    <dbReference type="NCBI Taxonomy" id="457570"/>
    <lineage>
        <taxon>Bacteria</taxon>
        <taxon>Bacillati</taxon>
        <taxon>Bacillota</taxon>
        <taxon>Clostridia</taxon>
        <taxon>Natranaerobiales</taxon>
        <taxon>Natranaerobiaceae</taxon>
        <taxon>Natranaerobius</taxon>
    </lineage>
</organism>
<evidence type="ECO:0000255" key="1">
    <source>
        <dbReference type="HAMAP-Rule" id="MF_00017"/>
    </source>
</evidence>
<gene>
    <name evidence="1" type="primary">recR</name>
    <name type="ordered locus">Nther_0017</name>
</gene>
<feature type="chain" id="PRO_1000089748" description="Recombination protein RecR">
    <location>
        <begin position="1"/>
        <end position="199"/>
    </location>
</feature>
<feature type="domain" description="Toprim" evidence="1">
    <location>
        <begin position="81"/>
        <end position="176"/>
    </location>
</feature>
<feature type="zinc finger region" description="C4-type" evidence="1">
    <location>
        <begin position="58"/>
        <end position="73"/>
    </location>
</feature>
<proteinExistence type="inferred from homology"/>
<reference key="1">
    <citation type="submission" date="2008-04" db="EMBL/GenBank/DDBJ databases">
        <title>Complete sequence of chromosome of Natranaerobius thermophilus JW/NM-WN-LF.</title>
        <authorList>
            <consortium name="US DOE Joint Genome Institute"/>
            <person name="Copeland A."/>
            <person name="Lucas S."/>
            <person name="Lapidus A."/>
            <person name="Glavina del Rio T."/>
            <person name="Dalin E."/>
            <person name="Tice H."/>
            <person name="Bruce D."/>
            <person name="Goodwin L."/>
            <person name="Pitluck S."/>
            <person name="Chertkov O."/>
            <person name="Brettin T."/>
            <person name="Detter J.C."/>
            <person name="Han C."/>
            <person name="Kuske C.R."/>
            <person name="Schmutz J."/>
            <person name="Larimer F."/>
            <person name="Land M."/>
            <person name="Hauser L."/>
            <person name="Kyrpides N."/>
            <person name="Lykidis A."/>
            <person name="Mesbah N.M."/>
            <person name="Wiegel J."/>
        </authorList>
    </citation>
    <scope>NUCLEOTIDE SEQUENCE [LARGE SCALE GENOMIC DNA]</scope>
    <source>
        <strain>ATCC BAA-1301 / DSM 18059 / JW/NM-WN-LF</strain>
    </source>
</reference>
<accession>B2A302</accession>
<sequence length="199" mass="22017">MSNYPKPINRLIEALSYLPGIGPKTAERLAFHIVSMDETKVNHLITALQDSRDKVFECSTCNNLTDKDPCTICQDESRDSNLICVVQDARDVTAIEKVQDFQGKYHVLQGVISPMEGIGPDDLNLKALMDRIQGEGITELVVATDPTVEGEATAMYLNKLVKPLGVRVTRLAYGLPMGGDLEYADEMTLQQAFEGRKEL</sequence>
<protein>
    <recommendedName>
        <fullName evidence="1">Recombination protein RecR</fullName>
    </recommendedName>
</protein>
<dbReference type="EMBL" id="CP001034">
    <property type="protein sequence ID" value="ACB83616.1"/>
    <property type="molecule type" value="Genomic_DNA"/>
</dbReference>
<dbReference type="RefSeq" id="WP_012446507.1">
    <property type="nucleotide sequence ID" value="NC_010718.1"/>
</dbReference>
<dbReference type="SMR" id="B2A302"/>
<dbReference type="FunCoup" id="B2A302">
    <property type="interactions" value="278"/>
</dbReference>
<dbReference type="STRING" id="457570.Nther_0017"/>
<dbReference type="KEGG" id="nth:Nther_0017"/>
<dbReference type="eggNOG" id="COG0353">
    <property type="taxonomic scope" value="Bacteria"/>
</dbReference>
<dbReference type="HOGENOM" id="CLU_060739_1_0_9"/>
<dbReference type="InParanoid" id="B2A302"/>
<dbReference type="OrthoDB" id="9802672at2"/>
<dbReference type="Proteomes" id="UP000001683">
    <property type="component" value="Chromosome"/>
</dbReference>
<dbReference type="GO" id="GO:0003677">
    <property type="term" value="F:DNA binding"/>
    <property type="evidence" value="ECO:0007669"/>
    <property type="project" value="UniProtKB-UniRule"/>
</dbReference>
<dbReference type="GO" id="GO:0008270">
    <property type="term" value="F:zinc ion binding"/>
    <property type="evidence" value="ECO:0007669"/>
    <property type="project" value="UniProtKB-KW"/>
</dbReference>
<dbReference type="GO" id="GO:0006310">
    <property type="term" value="P:DNA recombination"/>
    <property type="evidence" value="ECO:0007669"/>
    <property type="project" value="UniProtKB-UniRule"/>
</dbReference>
<dbReference type="GO" id="GO:0006281">
    <property type="term" value="P:DNA repair"/>
    <property type="evidence" value="ECO:0007669"/>
    <property type="project" value="UniProtKB-UniRule"/>
</dbReference>
<dbReference type="CDD" id="cd00080">
    <property type="entry name" value="H3TH_StructSpec-5'-nucleases"/>
    <property type="match status" value="1"/>
</dbReference>
<dbReference type="CDD" id="cd01025">
    <property type="entry name" value="TOPRIM_recR"/>
    <property type="match status" value="1"/>
</dbReference>
<dbReference type="Gene3D" id="3.30.60.80">
    <property type="match status" value="1"/>
</dbReference>
<dbReference type="Gene3D" id="3.40.1360.10">
    <property type="match status" value="1"/>
</dbReference>
<dbReference type="Gene3D" id="6.10.250.240">
    <property type="match status" value="1"/>
</dbReference>
<dbReference type="Gene3D" id="1.10.8.420">
    <property type="entry name" value="RecR Domain 1"/>
    <property type="match status" value="1"/>
</dbReference>
<dbReference type="HAMAP" id="MF_00017">
    <property type="entry name" value="RecR"/>
    <property type="match status" value="1"/>
</dbReference>
<dbReference type="InterPro" id="IPR000093">
    <property type="entry name" value="DNA_Rcmb_RecR"/>
</dbReference>
<dbReference type="InterPro" id="IPR023627">
    <property type="entry name" value="Rcmb_RecR"/>
</dbReference>
<dbReference type="InterPro" id="IPR015967">
    <property type="entry name" value="Rcmb_RecR_Znf"/>
</dbReference>
<dbReference type="InterPro" id="IPR006171">
    <property type="entry name" value="TOPRIM_dom"/>
</dbReference>
<dbReference type="InterPro" id="IPR034137">
    <property type="entry name" value="TOPRIM_RecR"/>
</dbReference>
<dbReference type="NCBIfam" id="TIGR00615">
    <property type="entry name" value="recR"/>
    <property type="match status" value="1"/>
</dbReference>
<dbReference type="PANTHER" id="PTHR30446">
    <property type="entry name" value="RECOMBINATION PROTEIN RECR"/>
    <property type="match status" value="1"/>
</dbReference>
<dbReference type="PANTHER" id="PTHR30446:SF0">
    <property type="entry name" value="RECOMBINATION PROTEIN RECR"/>
    <property type="match status" value="1"/>
</dbReference>
<dbReference type="Pfam" id="PF21175">
    <property type="entry name" value="RecR_C"/>
    <property type="match status" value="1"/>
</dbReference>
<dbReference type="Pfam" id="PF21176">
    <property type="entry name" value="RecR_HhH"/>
    <property type="match status" value="1"/>
</dbReference>
<dbReference type="Pfam" id="PF02132">
    <property type="entry name" value="RecR_ZnF"/>
    <property type="match status" value="1"/>
</dbReference>
<dbReference type="Pfam" id="PF13662">
    <property type="entry name" value="Toprim_4"/>
    <property type="match status" value="1"/>
</dbReference>
<dbReference type="SMART" id="SM00493">
    <property type="entry name" value="TOPRIM"/>
    <property type="match status" value="1"/>
</dbReference>
<dbReference type="SUPFAM" id="SSF111304">
    <property type="entry name" value="Recombination protein RecR"/>
    <property type="match status" value="1"/>
</dbReference>
<dbReference type="PROSITE" id="PS01300">
    <property type="entry name" value="RECR"/>
    <property type="match status" value="1"/>
</dbReference>
<dbReference type="PROSITE" id="PS50880">
    <property type="entry name" value="TOPRIM"/>
    <property type="match status" value="1"/>
</dbReference>
<keyword id="KW-0227">DNA damage</keyword>
<keyword id="KW-0233">DNA recombination</keyword>
<keyword id="KW-0234">DNA repair</keyword>
<keyword id="KW-0479">Metal-binding</keyword>
<keyword id="KW-1185">Reference proteome</keyword>
<keyword id="KW-0862">Zinc</keyword>
<keyword id="KW-0863">Zinc-finger</keyword>
<name>RECR_NATTJ</name>